<dbReference type="EC" id="7.1.1.-" evidence="1"/>
<dbReference type="EMBL" id="AE017321">
    <property type="protein sequence ID" value="AAW71209.1"/>
    <property type="molecule type" value="Genomic_DNA"/>
</dbReference>
<dbReference type="RefSeq" id="WP_011256819.1">
    <property type="nucleotide sequence ID" value="NC_006833.1"/>
</dbReference>
<dbReference type="SMR" id="Q5GS15"/>
<dbReference type="STRING" id="292805.Wbm0621"/>
<dbReference type="KEGG" id="wbm:Wbm0621"/>
<dbReference type="eggNOG" id="COG1007">
    <property type="taxonomic scope" value="Bacteria"/>
</dbReference>
<dbReference type="HOGENOM" id="CLU_007100_1_3_5"/>
<dbReference type="Proteomes" id="UP000000534">
    <property type="component" value="Chromosome"/>
</dbReference>
<dbReference type="GO" id="GO:0005886">
    <property type="term" value="C:plasma membrane"/>
    <property type="evidence" value="ECO:0007669"/>
    <property type="project" value="UniProtKB-SubCell"/>
</dbReference>
<dbReference type="GO" id="GO:0008137">
    <property type="term" value="F:NADH dehydrogenase (ubiquinone) activity"/>
    <property type="evidence" value="ECO:0007669"/>
    <property type="project" value="InterPro"/>
</dbReference>
<dbReference type="GO" id="GO:0050136">
    <property type="term" value="F:NADH:ubiquinone reductase (non-electrogenic) activity"/>
    <property type="evidence" value="ECO:0007669"/>
    <property type="project" value="UniProtKB-UniRule"/>
</dbReference>
<dbReference type="GO" id="GO:0048038">
    <property type="term" value="F:quinone binding"/>
    <property type="evidence" value="ECO:0007669"/>
    <property type="project" value="UniProtKB-KW"/>
</dbReference>
<dbReference type="GO" id="GO:0042773">
    <property type="term" value="P:ATP synthesis coupled electron transport"/>
    <property type="evidence" value="ECO:0007669"/>
    <property type="project" value="InterPro"/>
</dbReference>
<dbReference type="HAMAP" id="MF_00445">
    <property type="entry name" value="NDH1_NuoN_1"/>
    <property type="match status" value="1"/>
</dbReference>
<dbReference type="InterPro" id="IPR010096">
    <property type="entry name" value="NADH-Q_OxRdtase_suN/2"/>
</dbReference>
<dbReference type="InterPro" id="IPR001750">
    <property type="entry name" value="ND/Mrp_TM"/>
</dbReference>
<dbReference type="NCBIfam" id="TIGR01770">
    <property type="entry name" value="NDH_I_N"/>
    <property type="match status" value="1"/>
</dbReference>
<dbReference type="PANTHER" id="PTHR22773">
    <property type="entry name" value="NADH DEHYDROGENASE"/>
    <property type="match status" value="1"/>
</dbReference>
<dbReference type="Pfam" id="PF00361">
    <property type="entry name" value="Proton_antipo_M"/>
    <property type="match status" value="1"/>
</dbReference>
<name>NUON_WOLTR</name>
<reference key="1">
    <citation type="journal article" date="2005" name="PLoS Biol.">
        <title>The Wolbachia genome of Brugia malayi: endosymbiont evolution within a human pathogenic nematode.</title>
        <authorList>
            <person name="Foster J."/>
            <person name="Ganatra M."/>
            <person name="Kamal I."/>
            <person name="Ware J."/>
            <person name="Makarova K."/>
            <person name="Ivanova N."/>
            <person name="Bhattacharyya A."/>
            <person name="Kapatral V."/>
            <person name="Kumar S."/>
            <person name="Posfai J."/>
            <person name="Vincze T."/>
            <person name="Ingram J."/>
            <person name="Moran L."/>
            <person name="Lapidus A."/>
            <person name="Omelchenko M."/>
            <person name="Kyrpides N."/>
            <person name="Ghedin E."/>
            <person name="Wang S."/>
            <person name="Goltsman E."/>
            <person name="Joukov V."/>
            <person name="Ostrovskaya O."/>
            <person name="Tsukerman K."/>
            <person name="Mazur M."/>
            <person name="Comb D."/>
            <person name="Koonin E."/>
            <person name="Slatko B."/>
        </authorList>
    </citation>
    <scope>NUCLEOTIDE SEQUENCE [LARGE SCALE GENOMIC DNA]</scope>
    <source>
        <strain>TRS</strain>
    </source>
</reference>
<protein>
    <recommendedName>
        <fullName evidence="1">NADH-quinone oxidoreductase subunit N</fullName>
        <ecNumber evidence="1">7.1.1.-</ecNumber>
    </recommendedName>
    <alternativeName>
        <fullName evidence="1">NADH dehydrogenase I subunit N</fullName>
    </alternativeName>
    <alternativeName>
        <fullName evidence="1">NDH-1 subunit N</fullName>
    </alternativeName>
</protein>
<organism>
    <name type="scientific">Wolbachia sp. subsp. Brugia malayi (strain TRS)</name>
    <dbReference type="NCBI Taxonomy" id="292805"/>
    <lineage>
        <taxon>Bacteria</taxon>
        <taxon>Pseudomonadati</taxon>
        <taxon>Pseudomonadota</taxon>
        <taxon>Alphaproteobacteria</taxon>
        <taxon>Rickettsiales</taxon>
        <taxon>Anaplasmataceae</taxon>
        <taxon>Wolbachieae</taxon>
        <taxon>Wolbachia</taxon>
    </lineage>
</organism>
<sequence>MSYIQILPETFSIISSLVLLLLGIVFNRRTINLLALGCTVITLIILILSAKDSGFFPFNSLLKLDLYIRSAQGLILIAGILVLLLLNLSKYDYEYEFSILILFTLFGMITLVSANNLISFYLSFELMSIPLYVLASFNKDSVYSCEAGVKYFTLSALSSCIMLYGMSLLYGYTGLVNFSELSSFLENHQMTYGIVFGLVLILIGLCFKLAIAPFHMWAPDVYQGAPTIVTAFFSTVPKAALVTFLIRFFMGEELVGVEKYFQPVLLYISALSVLISAFGALRQRNLKRLLAYSSIGHIGFILASLSIFTRMGTDSSLIYLVIYIITNIGLFSYFIQIDDDDCSVANLSGIGKKRPVLAFHLSILLFSMAGIPPLAGFFAKLFIFKSLVNSGFIGMSLIFIVASVISCYYYLSIIKAMYFDKPSDSKVIYSKSLFIVTSVASLINIVLFMCVEDLYSLIHLVTKSL</sequence>
<evidence type="ECO:0000255" key="1">
    <source>
        <dbReference type="HAMAP-Rule" id="MF_00445"/>
    </source>
</evidence>
<feature type="chain" id="PRO_0000391245" description="NADH-quinone oxidoreductase subunit N">
    <location>
        <begin position="1"/>
        <end position="465"/>
    </location>
</feature>
<feature type="transmembrane region" description="Helical" evidence="1">
    <location>
        <begin position="6"/>
        <end position="26"/>
    </location>
</feature>
<feature type="transmembrane region" description="Helical" evidence="1">
    <location>
        <begin position="30"/>
        <end position="50"/>
    </location>
</feature>
<feature type="transmembrane region" description="Helical" evidence="1">
    <location>
        <begin position="66"/>
        <end position="86"/>
    </location>
</feature>
<feature type="transmembrane region" description="Helical" evidence="1">
    <location>
        <begin position="98"/>
        <end position="118"/>
    </location>
</feature>
<feature type="transmembrane region" description="Helical" evidence="1">
    <location>
        <begin position="156"/>
        <end position="176"/>
    </location>
</feature>
<feature type="transmembrane region" description="Helical" evidence="1">
    <location>
        <begin position="194"/>
        <end position="214"/>
    </location>
</feature>
<feature type="transmembrane region" description="Helical" evidence="1">
    <location>
        <begin position="226"/>
        <end position="246"/>
    </location>
</feature>
<feature type="transmembrane region" description="Helical" evidence="1">
    <location>
        <begin position="261"/>
        <end position="281"/>
    </location>
</feature>
<feature type="transmembrane region" description="Helical" evidence="1">
    <location>
        <begin position="289"/>
        <end position="309"/>
    </location>
</feature>
<feature type="transmembrane region" description="Helical" evidence="1">
    <location>
        <begin position="317"/>
        <end position="337"/>
    </location>
</feature>
<feature type="transmembrane region" description="Helical" evidence="1">
    <location>
        <begin position="363"/>
        <end position="383"/>
    </location>
</feature>
<feature type="transmembrane region" description="Helical" evidence="1">
    <location>
        <begin position="391"/>
        <end position="411"/>
    </location>
</feature>
<feature type="transmembrane region" description="Helical" evidence="1">
    <location>
        <begin position="432"/>
        <end position="452"/>
    </location>
</feature>
<gene>
    <name evidence="1" type="primary">nuoN</name>
    <name type="ordered locus">Wbm0621</name>
</gene>
<comment type="function">
    <text evidence="1">NDH-1 shuttles electrons from NADH, via FMN and iron-sulfur (Fe-S) centers, to quinones in the respiratory chain. The immediate electron acceptor for the enzyme in this species is believed to be ubiquinone. Couples the redox reaction to proton translocation (for every two electrons transferred, four hydrogen ions are translocated across the cytoplasmic membrane), and thus conserves the redox energy in a proton gradient.</text>
</comment>
<comment type="catalytic activity">
    <reaction evidence="1">
        <text>a quinone + NADH + 5 H(+)(in) = a quinol + NAD(+) + 4 H(+)(out)</text>
        <dbReference type="Rhea" id="RHEA:57888"/>
        <dbReference type="ChEBI" id="CHEBI:15378"/>
        <dbReference type="ChEBI" id="CHEBI:24646"/>
        <dbReference type="ChEBI" id="CHEBI:57540"/>
        <dbReference type="ChEBI" id="CHEBI:57945"/>
        <dbReference type="ChEBI" id="CHEBI:132124"/>
    </reaction>
</comment>
<comment type="subunit">
    <text evidence="1">NDH-1 is composed of 14 different subunits. Subunits NuoA, H, J, K, L, M, N constitute the membrane sector of the complex.</text>
</comment>
<comment type="subcellular location">
    <subcellularLocation>
        <location evidence="1">Cell membrane</location>
        <topology evidence="1">Multi-pass membrane protein</topology>
    </subcellularLocation>
</comment>
<comment type="similarity">
    <text evidence="1">Belongs to the complex I subunit 2 family.</text>
</comment>
<proteinExistence type="inferred from homology"/>
<keyword id="KW-1003">Cell membrane</keyword>
<keyword id="KW-0472">Membrane</keyword>
<keyword id="KW-0520">NAD</keyword>
<keyword id="KW-0874">Quinone</keyword>
<keyword id="KW-1185">Reference proteome</keyword>
<keyword id="KW-1278">Translocase</keyword>
<keyword id="KW-0812">Transmembrane</keyword>
<keyword id="KW-1133">Transmembrane helix</keyword>
<keyword id="KW-0813">Transport</keyword>
<keyword id="KW-0830">Ubiquinone</keyword>
<accession>Q5GS15</accession>